<reference key="1">
    <citation type="journal article" date="2004" name="Science">
        <title>Illuminating the evolutionary history of chlamydiae.</title>
        <authorList>
            <person name="Horn M."/>
            <person name="Collingro A."/>
            <person name="Schmitz-Esser S."/>
            <person name="Beier C.L."/>
            <person name="Purkhold U."/>
            <person name="Fartmann B."/>
            <person name="Brandt P."/>
            <person name="Nyakatura G.J."/>
            <person name="Droege M."/>
            <person name="Frishman D."/>
            <person name="Rattei T."/>
            <person name="Mewes H.-W."/>
            <person name="Wagner M."/>
        </authorList>
    </citation>
    <scope>NUCLEOTIDE SEQUENCE [LARGE SCALE GENOMIC DNA]</scope>
    <source>
        <strain>UWE25</strain>
    </source>
</reference>
<dbReference type="EMBL" id="BX908798">
    <property type="protein sequence ID" value="CAF23191.1"/>
    <property type="molecule type" value="Genomic_DNA"/>
</dbReference>
<dbReference type="RefSeq" id="WP_011175017.1">
    <property type="nucleotide sequence ID" value="NC_005861.2"/>
</dbReference>
<dbReference type="SMR" id="Q6ME08"/>
<dbReference type="STRING" id="264201.pc0467"/>
<dbReference type="KEGG" id="pcu:PC_RS02270"/>
<dbReference type="eggNOG" id="COG0828">
    <property type="taxonomic scope" value="Bacteria"/>
</dbReference>
<dbReference type="HOGENOM" id="CLU_159258_2_3_0"/>
<dbReference type="OrthoDB" id="9799244at2"/>
<dbReference type="Proteomes" id="UP000000529">
    <property type="component" value="Chromosome"/>
</dbReference>
<dbReference type="GO" id="GO:1990904">
    <property type="term" value="C:ribonucleoprotein complex"/>
    <property type="evidence" value="ECO:0007669"/>
    <property type="project" value="UniProtKB-KW"/>
</dbReference>
<dbReference type="GO" id="GO:0005840">
    <property type="term" value="C:ribosome"/>
    <property type="evidence" value="ECO:0007669"/>
    <property type="project" value="UniProtKB-KW"/>
</dbReference>
<dbReference type="GO" id="GO:0003735">
    <property type="term" value="F:structural constituent of ribosome"/>
    <property type="evidence" value="ECO:0007669"/>
    <property type="project" value="InterPro"/>
</dbReference>
<dbReference type="GO" id="GO:0006412">
    <property type="term" value="P:translation"/>
    <property type="evidence" value="ECO:0007669"/>
    <property type="project" value="UniProtKB-UniRule"/>
</dbReference>
<dbReference type="Gene3D" id="1.20.5.1150">
    <property type="entry name" value="Ribosomal protein S8"/>
    <property type="match status" value="1"/>
</dbReference>
<dbReference type="HAMAP" id="MF_00358">
    <property type="entry name" value="Ribosomal_bS21"/>
    <property type="match status" value="1"/>
</dbReference>
<dbReference type="InterPro" id="IPR001911">
    <property type="entry name" value="Ribosomal_bS21"/>
</dbReference>
<dbReference type="InterPro" id="IPR018278">
    <property type="entry name" value="Ribosomal_bS21_CS"/>
</dbReference>
<dbReference type="InterPro" id="IPR038380">
    <property type="entry name" value="Ribosomal_bS21_sf"/>
</dbReference>
<dbReference type="NCBIfam" id="TIGR00030">
    <property type="entry name" value="S21p"/>
    <property type="match status" value="1"/>
</dbReference>
<dbReference type="Pfam" id="PF01165">
    <property type="entry name" value="Ribosomal_S21"/>
    <property type="match status" value="1"/>
</dbReference>
<dbReference type="PRINTS" id="PR00976">
    <property type="entry name" value="RIBOSOMALS21"/>
</dbReference>
<dbReference type="PROSITE" id="PS01181">
    <property type="entry name" value="RIBOSOMAL_S21"/>
    <property type="match status" value="1"/>
</dbReference>
<comment type="similarity">
    <text evidence="1">Belongs to the bacterial ribosomal protein bS21 family.</text>
</comment>
<keyword id="KW-1185">Reference proteome</keyword>
<keyword id="KW-0687">Ribonucleoprotein</keyword>
<keyword id="KW-0689">Ribosomal protein</keyword>
<sequence>MSLVKVRIGDSIDKALRALKKRLDKEGVMKSVKAHRFYSKPSIKKRAKSKAALKYKKQR</sequence>
<gene>
    <name evidence="1" type="primary">rpsU</name>
    <name type="ordered locus">pc0467</name>
</gene>
<accession>Q6ME08</accession>
<feature type="chain" id="PRO_0000266732" description="Small ribosomal subunit protein bS21">
    <location>
        <begin position="1"/>
        <end position="59"/>
    </location>
</feature>
<feature type="region of interest" description="Disordered" evidence="2">
    <location>
        <begin position="40"/>
        <end position="59"/>
    </location>
</feature>
<proteinExistence type="inferred from homology"/>
<evidence type="ECO:0000255" key="1">
    <source>
        <dbReference type="HAMAP-Rule" id="MF_00358"/>
    </source>
</evidence>
<evidence type="ECO:0000256" key="2">
    <source>
        <dbReference type="SAM" id="MobiDB-lite"/>
    </source>
</evidence>
<evidence type="ECO:0000305" key="3"/>
<name>RS21_PARUW</name>
<protein>
    <recommendedName>
        <fullName evidence="1">Small ribosomal subunit protein bS21</fullName>
    </recommendedName>
    <alternativeName>
        <fullName evidence="3">30S ribosomal protein S21</fullName>
    </alternativeName>
</protein>
<organism>
    <name type="scientific">Protochlamydia amoebophila (strain UWE25)</name>
    <dbReference type="NCBI Taxonomy" id="264201"/>
    <lineage>
        <taxon>Bacteria</taxon>
        <taxon>Pseudomonadati</taxon>
        <taxon>Chlamydiota</taxon>
        <taxon>Chlamydiia</taxon>
        <taxon>Parachlamydiales</taxon>
        <taxon>Parachlamydiaceae</taxon>
        <taxon>Candidatus Protochlamydia</taxon>
    </lineage>
</organism>